<comment type="function">
    <text evidence="1">Protease subunit of a proteasome-like degradation complex believed to be a general protein degrading machinery.</text>
</comment>
<comment type="catalytic activity">
    <reaction evidence="1">
        <text>ATP-dependent cleavage of peptide bonds with broad specificity.</text>
        <dbReference type="EC" id="3.4.25.2"/>
    </reaction>
</comment>
<comment type="activity regulation">
    <text evidence="1">Allosterically activated by HslU binding.</text>
</comment>
<comment type="subunit">
    <text evidence="1">A double ring-shaped homohexamer of HslV is capped on each side by a ring-shaped HslU homohexamer. The assembly of the HslU/HslV complex is dependent on binding of ATP.</text>
</comment>
<comment type="subcellular location">
    <subcellularLocation>
        <location evidence="1">Cytoplasm</location>
    </subcellularLocation>
</comment>
<comment type="similarity">
    <text evidence="1">Belongs to the peptidase T1B family. HslV subfamily.</text>
</comment>
<gene>
    <name evidence="1" type="primary">hslV</name>
    <name type="ordered locus">ABC2275</name>
</gene>
<sequence length="181" mass="19507">MEGFHATTIFAIAHNGGFAMAGDGQVTFGNAVVMKHTARKVRRLYHNNVLAGFAGSVADAFTLFEKFEAKLEEYNGNLQRASVELAKEWRSDRVLRKLEAMLIVMDKQALLLISGTGEVIQPDDGILAIGSGGNYALSAGRALKRHAPGLSAREIAVAALETAGEICVYTNDQIVVEELTE</sequence>
<reference key="1">
    <citation type="submission" date="2003-10" db="EMBL/GenBank/DDBJ databases">
        <title>The complete genome sequence of the alkaliphilic Bacillus clausii KSM-K16.</title>
        <authorList>
            <person name="Takaki Y."/>
            <person name="Kageyama Y."/>
            <person name="Shimamura S."/>
            <person name="Suzuki H."/>
            <person name="Nishi S."/>
            <person name="Hatada Y."/>
            <person name="Kawai S."/>
            <person name="Ito S."/>
            <person name="Horikoshi K."/>
        </authorList>
    </citation>
    <scope>NUCLEOTIDE SEQUENCE [LARGE SCALE GENOMIC DNA]</scope>
    <source>
        <strain>KSM-K16</strain>
    </source>
</reference>
<name>HSLV_SHOC1</name>
<evidence type="ECO:0000255" key="1">
    <source>
        <dbReference type="HAMAP-Rule" id="MF_00248"/>
    </source>
</evidence>
<organism>
    <name type="scientific">Shouchella clausii (strain KSM-K16)</name>
    <name type="common">Alkalihalobacillus clausii</name>
    <dbReference type="NCBI Taxonomy" id="66692"/>
    <lineage>
        <taxon>Bacteria</taxon>
        <taxon>Bacillati</taxon>
        <taxon>Bacillota</taxon>
        <taxon>Bacilli</taxon>
        <taxon>Bacillales</taxon>
        <taxon>Bacillaceae</taxon>
        <taxon>Shouchella</taxon>
    </lineage>
</organism>
<accession>Q5WFQ0</accession>
<protein>
    <recommendedName>
        <fullName evidence="1">ATP-dependent protease subunit HslV</fullName>
        <ecNumber evidence="1">3.4.25.2</ecNumber>
    </recommendedName>
</protein>
<feature type="chain" id="PRO_0000148083" description="ATP-dependent protease subunit HslV">
    <location>
        <begin position="1"/>
        <end position="181"/>
    </location>
</feature>
<feature type="active site" evidence="1">
    <location>
        <position position="7"/>
    </location>
</feature>
<feature type="binding site" evidence="1">
    <location>
        <position position="164"/>
    </location>
    <ligand>
        <name>Na(+)</name>
        <dbReference type="ChEBI" id="CHEBI:29101"/>
    </ligand>
</feature>
<feature type="binding site" evidence="1">
    <location>
        <position position="167"/>
    </location>
    <ligand>
        <name>Na(+)</name>
        <dbReference type="ChEBI" id="CHEBI:29101"/>
    </ligand>
</feature>
<feature type="binding site" evidence="1">
    <location>
        <position position="170"/>
    </location>
    <ligand>
        <name>Na(+)</name>
        <dbReference type="ChEBI" id="CHEBI:29101"/>
    </ligand>
</feature>
<proteinExistence type="inferred from homology"/>
<dbReference type="EC" id="3.4.25.2" evidence="1"/>
<dbReference type="EMBL" id="AP006627">
    <property type="protein sequence ID" value="BAD64810.1"/>
    <property type="molecule type" value="Genomic_DNA"/>
</dbReference>
<dbReference type="RefSeq" id="WP_011247118.1">
    <property type="nucleotide sequence ID" value="NC_006582.1"/>
</dbReference>
<dbReference type="SMR" id="Q5WFQ0"/>
<dbReference type="STRING" id="66692.ABC2275"/>
<dbReference type="MEROPS" id="T01.007"/>
<dbReference type="KEGG" id="bcl:ABC2275"/>
<dbReference type="eggNOG" id="COG5405">
    <property type="taxonomic scope" value="Bacteria"/>
</dbReference>
<dbReference type="HOGENOM" id="CLU_093872_1_0_9"/>
<dbReference type="OrthoDB" id="9804884at2"/>
<dbReference type="Proteomes" id="UP000001168">
    <property type="component" value="Chromosome"/>
</dbReference>
<dbReference type="GO" id="GO:0009376">
    <property type="term" value="C:HslUV protease complex"/>
    <property type="evidence" value="ECO:0007669"/>
    <property type="project" value="UniProtKB-UniRule"/>
</dbReference>
<dbReference type="GO" id="GO:0005839">
    <property type="term" value="C:proteasome core complex"/>
    <property type="evidence" value="ECO:0007669"/>
    <property type="project" value="InterPro"/>
</dbReference>
<dbReference type="GO" id="GO:0046872">
    <property type="term" value="F:metal ion binding"/>
    <property type="evidence" value="ECO:0007669"/>
    <property type="project" value="UniProtKB-KW"/>
</dbReference>
<dbReference type="GO" id="GO:0004298">
    <property type="term" value="F:threonine-type endopeptidase activity"/>
    <property type="evidence" value="ECO:0007669"/>
    <property type="project" value="UniProtKB-KW"/>
</dbReference>
<dbReference type="GO" id="GO:0051603">
    <property type="term" value="P:proteolysis involved in protein catabolic process"/>
    <property type="evidence" value="ECO:0007669"/>
    <property type="project" value="InterPro"/>
</dbReference>
<dbReference type="CDD" id="cd01913">
    <property type="entry name" value="protease_HslV"/>
    <property type="match status" value="1"/>
</dbReference>
<dbReference type="Gene3D" id="3.60.20.10">
    <property type="entry name" value="Glutamine Phosphoribosylpyrophosphate, subunit 1, domain 1"/>
    <property type="match status" value="1"/>
</dbReference>
<dbReference type="HAMAP" id="MF_00248">
    <property type="entry name" value="HslV"/>
    <property type="match status" value="1"/>
</dbReference>
<dbReference type="InterPro" id="IPR022281">
    <property type="entry name" value="ATP-dep_Prtase_HsIV_su"/>
</dbReference>
<dbReference type="InterPro" id="IPR029055">
    <property type="entry name" value="Ntn_hydrolases_N"/>
</dbReference>
<dbReference type="InterPro" id="IPR001353">
    <property type="entry name" value="Proteasome_sua/b"/>
</dbReference>
<dbReference type="InterPro" id="IPR023333">
    <property type="entry name" value="Proteasome_suB-type"/>
</dbReference>
<dbReference type="NCBIfam" id="TIGR03692">
    <property type="entry name" value="ATP_dep_HslV"/>
    <property type="match status" value="1"/>
</dbReference>
<dbReference type="NCBIfam" id="NF003964">
    <property type="entry name" value="PRK05456.1"/>
    <property type="match status" value="1"/>
</dbReference>
<dbReference type="PANTHER" id="PTHR32194:SF0">
    <property type="entry name" value="ATP-DEPENDENT PROTEASE SUBUNIT HSLV"/>
    <property type="match status" value="1"/>
</dbReference>
<dbReference type="PANTHER" id="PTHR32194">
    <property type="entry name" value="METALLOPROTEASE TLDD"/>
    <property type="match status" value="1"/>
</dbReference>
<dbReference type="Pfam" id="PF00227">
    <property type="entry name" value="Proteasome"/>
    <property type="match status" value="1"/>
</dbReference>
<dbReference type="PIRSF" id="PIRSF039093">
    <property type="entry name" value="HslV"/>
    <property type="match status" value="1"/>
</dbReference>
<dbReference type="SUPFAM" id="SSF56235">
    <property type="entry name" value="N-terminal nucleophile aminohydrolases (Ntn hydrolases)"/>
    <property type="match status" value="1"/>
</dbReference>
<dbReference type="PROSITE" id="PS51476">
    <property type="entry name" value="PROTEASOME_BETA_2"/>
    <property type="match status" value="1"/>
</dbReference>
<keyword id="KW-0021">Allosteric enzyme</keyword>
<keyword id="KW-0963">Cytoplasm</keyword>
<keyword id="KW-0378">Hydrolase</keyword>
<keyword id="KW-0479">Metal-binding</keyword>
<keyword id="KW-0645">Protease</keyword>
<keyword id="KW-1185">Reference proteome</keyword>
<keyword id="KW-0915">Sodium</keyword>
<keyword id="KW-0888">Threonine protease</keyword>